<evidence type="ECO:0000255" key="1">
    <source>
        <dbReference type="HAMAP-Rule" id="MF_00817"/>
    </source>
</evidence>
<dbReference type="EC" id="1.7.1.13" evidence="1"/>
<dbReference type="EMBL" id="AJ235270">
    <property type="protein sequence ID" value="CAA14543.1"/>
    <property type="molecule type" value="Genomic_DNA"/>
</dbReference>
<dbReference type="PIR" id="H71715">
    <property type="entry name" value="H71715"/>
</dbReference>
<dbReference type="RefSeq" id="NP_220466.1">
    <property type="nucleotide sequence ID" value="NC_000963.1"/>
</dbReference>
<dbReference type="RefSeq" id="WP_004596554.1">
    <property type="nucleotide sequence ID" value="NC_000963.1"/>
</dbReference>
<dbReference type="SMR" id="Q9ZE74"/>
<dbReference type="STRING" id="272947.gene:17555155"/>
<dbReference type="EnsemblBacteria" id="CAA14543">
    <property type="protein sequence ID" value="CAA14543"/>
    <property type="gene ID" value="CAA14543"/>
</dbReference>
<dbReference type="GeneID" id="57569200"/>
<dbReference type="KEGG" id="rpr:RP072"/>
<dbReference type="PATRIC" id="fig|272947.5.peg.73"/>
<dbReference type="eggNOG" id="COG0780">
    <property type="taxonomic scope" value="Bacteria"/>
</dbReference>
<dbReference type="eggNOG" id="COG2904">
    <property type="taxonomic scope" value="Bacteria"/>
</dbReference>
<dbReference type="HOGENOM" id="CLU_054738_0_0_5"/>
<dbReference type="OrthoDB" id="9789995at2"/>
<dbReference type="UniPathway" id="UPA00392"/>
<dbReference type="Proteomes" id="UP000002480">
    <property type="component" value="Chromosome"/>
</dbReference>
<dbReference type="GO" id="GO:0005737">
    <property type="term" value="C:cytoplasm"/>
    <property type="evidence" value="ECO:0007669"/>
    <property type="project" value="UniProtKB-SubCell"/>
</dbReference>
<dbReference type="GO" id="GO:0033739">
    <property type="term" value="F:preQ1 synthase activity"/>
    <property type="evidence" value="ECO:0007669"/>
    <property type="project" value="UniProtKB-UniRule"/>
</dbReference>
<dbReference type="GO" id="GO:0008616">
    <property type="term" value="P:queuosine biosynthetic process"/>
    <property type="evidence" value="ECO:0007669"/>
    <property type="project" value="UniProtKB-UniRule"/>
</dbReference>
<dbReference type="GO" id="GO:0006400">
    <property type="term" value="P:tRNA modification"/>
    <property type="evidence" value="ECO:0007669"/>
    <property type="project" value="UniProtKB-UniRule"/>
</dbReference>
<dbReference type="Gene3D" id="3.30.1130.10">
    <property type="match status" value="2"/>
</dbReference>
<dbReference type="HAMAP" id="MF_00817">
    <property type="entry name" value="QueF_type2"/>
    <property type="match status" value="1"/>
</dbReference>
<dbReference type="InterPro" id="IPR043133">
    <property type="entry name" value="GTP-CH-I_C/QueF"/>
</dbReference>
<dbReference type="InterPro" id="IPR050084">
    <property type="entry name" value="NADPH_dep_7-cyano-7-deazaG_red"/>
</dbReference>
<dbReference type="InterPro" id="IPR029500">
    <property type="entry name" value="QueF"/>
</dbReference>
<dbReference type="InterPro" id="IPR029139">
    <property type="entry name" value="QueF_N"/>
</dbReference>
<dbReference type="InterPro" id="IPR016428">
    <property type="entry name" value="QueF_type2"/>
</dbReference>
<dbReference type="NCBIfam" id="TIGR03138">
    <property type="entry name" value="QueF"/>
    <property type="match status" value="1"/>
</dbReference>
<dbReference type="PANTHER" id="PTHR34354">
    <property type="entry name" value="NADPH-DEPENDENT 7-CYANO-7-DEAZAGUANINE REDUCTASE"/>
    <property type="match status" value="1"/>
</dbReference>
<dbReference type="PANTHER" id="PTHR34354:SF1">
    <property type="entry name" value="NADPH-DEPENDENT 7-CYANO-7-DEAZAGUANINE REDUCTASE"/>
    <property type="match status" value="1"/>
</dbReference>
<dbReference type="Pfam" id="PF14489">
    <property type="entry name" value="QueF"/>
    <property type="match status" value="1"/>
</dbReference>
<dbReference type="Pfam" id="PF14819">
    <property type="entry name" value="QueF_N"/>
    <property type="match status" value="1"/>
</dbReference>
<dbReference type="PIRSF" id="PIRSF004750">
    <property type="entry name" value="Nitrile_oxidored_YqcD_prd"/>
    <property type="match status" value="1"/>
</dbReference>
<dbReference type="SUPFAM" id="SSF55620">
    <property type="entry name" value="Tetrahydrobiopterin biosynthesis enzymes-like"/>
    <property type="match status" value="1"/>
</dbReference>
<sequence>MPLSTSLLGKKNTYKDSYDATLLFKIPRINNRNVLGIDSNHLPFYGVDIWNTYEISCLNKNGKPLVGIGTFYIPADSENIVESKSFKLYLNSFNNFIIESIEELERIILQDLSNVTYAKVTGRIFPINTKIEFGIPSGKNIDNLDIVCNNYGPPDNSLIEYEDVLVEEEIYSNLFKSNCLVTGQPDWGTIVIKYKGKKLKYDSFLRYLISFRNFNEFAEQCAERIFIDIKNSINLDFLSIYIVYTRRGGIDICPYRSTDKSYTLPNDKRLIRQ</sequence>
<proteinExistence type="inferred from homology"/>
<organism>
    <name type="scientific">Rickettsia prowazekii (strain Madrid E)</name>
    <dbReference type="NCBI Taxonomy" id="272947"/>
    <lineage>
        <taxon>Bacteria</taxon>
        <taxon>Pseudomonadati</taxon>
        <taxon>Pseudomonadota</taxon>
        <taxon>Alphaproteobacteria</taxon>
        <taxon>Rickettsiales</taxon>
        <taxon>Rickettsiaceae</taxon>
        <taxon>Rickettsieae</taxon>
        <taxon>Rickettsia</taxon>
        <taxon>typhus group</taxon>
    </lineage>
</organism>
<gene>
    <name evidence="1" type="primary">queF</name>
    <name type="ordered locus">RP072</name>
</gene>
<comment type="function">
    <text evidence="1">Catalyzes the NADPH-dependent reduction of 7-cyano-7-deazaguanine (preQ0) to 7-aminomethyl-7-deazaguanine (preQ1).</text>
</comment>
<comment type="catalytic activity">
    <reaction evidence="1">
        <text>7-aminomethyl-7-carbaguanine + 2 NADP(+) = 7-cyano-7-deazaguanine + 2 NADPH + 3 H(+)</text>
        <dbReference type="Rhea" id="RHEA:13409"/>
        <dbReference type="ChEBI" id="CHEBI:15378"/>
        <dbReference type="ChEBI" id="CHEBI:45075"/>
        <dbReference type="ChEBI" id="CHEBI:57783"/>
        <dbReference type="ChEBI" id="CHEBI:58349"/>
        <dbReference type="ChEBI" id="CHEBI:58703"/>
        <dbReference type="EC" id="1.7.1.13"/>
    </reaction>
</comment>
<comment type="pathway">
    <text evidence="1">tRNA modification; tRNA-queuosine biosynthesis.</text>
</comment>
<comment type="subunit">
    <text evidence="1">Homodimer.</text>
</comment>
<comment type="subcellular location">
    <subcellularLocation>
        <location evidence="1">Cytoplasm</location>
    </subcellularLocation>
</comment>
<comment type="similarity">
    <text evidence="1">Belongs to the GTP cyclohydrolase I family. QueF type 2 subfamily.</text>
</comment>
<keyword id="KW-0963">Cytoplasm</keyword>
<keyword id="KW-0521">NADP</keyword>
<keyword id="KW-0560">Oxidoreductase</keyword>
<keyword id="KW-0671">Queuosine biosynthesis</keyword>
<keyword id="KW-1185">Reference proteome</keyword>
<accession>Q9ZE74</accession>
<reference key="1">
    <citation type="journal article" date="1998" name="Nature">
        <title>The genome sequence of Rickettsia prowazekii and the origin of mitochondria.</title>
        <authorList>
            <person name="Andersson S.G.E."/>
            <person name="Zomorodipour A."/>
            <person name="Andersson J.O."/>
            <person name="Sicheritz-Ponten T."/>
            <person name="Alsmark U.C.M."/>
            <person name="Podowski R.M."/>
            <person name="Naeslund A.K."/>
            <person name="Eriksson A.-S."/>
            <person name="Winkler H.H."/>
            <person name="Kurland C.G."/>
        </authorList>
    </citation>
    <scope>NUCLEOTIDE SEQUENCE [LARGE SCALE GENOMIC DNA]</scope>
    <source>
        <strain>Madrid E</strain>
    </source>
</reference>
<feature type="chain" id="PRO_0000163054" description="NADPH-dependent 7-cyano-7-deazaguanine reductase">
    <location>
        <begin position="1"/>
        <end position="273"/>
    </location>
</feature>
<feature type="active site" description="Thioimide intermediate" evidence="1">
    <location>
        <position position="179"/>
    </location>
</feature>
<feature type="active site" description="Proton donor" evidence="1">
    <location>
        <position position="186"/>
    </location>
</feature>
<feature type="binding site" evidence="1">
    <location>
        <begin position="81"/>
        <end position="83"/>
    </location>
    <ligand>
        <name>substrate</name>
    </ligand>
</feature>
<feature type="binding site" evidence="1">
    <location>
        <begin position="83"/>
        <end position="84"/>
    </location>
    <ligand>
        <name>NADPH</name>
        <dbReference type="ChEBI" id="CHEBI:57783"/>
    </ligand>
</feature>
<feature type="binding site" evidence="1">
    <location>
        <begin position="218"/>
        <end position="219"/>
    </location>
    <ligand>
        <name>substrate</name>
    </ligand>
</feature>
<feature type="binding site" evidence="1">
    <location>
        <begin position="247"/>
        <end position="248"/>
    </location>
    <ligand>
        <name>NADPH</name>
        <dbReference type="ChEBI" id="CHEBI:57783"/>
    </ligand>
</feature>
<protein>
    <recommendedName>
        <fullName evidence="1">NADPH-dependent 7-cyano-7-deazaguanine reductase</fullName>
        <ecNumber evidence="1">1.7.1.13</ecNumber>
    </recommendedName>
    <alternativeName>
        <fullName evidence="1">7-cyano-7-carbaguanine reductase</fullName>
    </alternativeName>
    <alternativeName>
        <fullName evidence="1">NADPH-dependent nitrile oxidoreductase</fullName>
    </alternativeName>
    <alternativeName>
        <fullName evidence="1">PreQ(0) reductase</fullName>
    </alternativeName>
</protein>
<name>QUEF_RICPR</name>